<sequence>MRSHFCTEISEKDVGKTIKVAGWCNTYRDHGGVVFIDLRDKSGLVQLVCDPSSKAYEKALEVRSEFVLVAKGRVRLRGPGLENPKLKTGKIEIVLEELVIENKSATPPIEIGNKNVNEDLRLKYRYLDLRSLNAYEIFKLRSEVALITRNTLAQKGFLEIETPILSKTTPEGARDYLVPSRVHEGEFFALPQSPQLFKQLLMVGGMDRYFQIARCFRDEDLRADRQPEFTQIDAEMSFCDENDVMGVVEDLLQAIFKAVGHTISKPFKRMPYKEAMENYGSDKPDLRFELPLIEVGDCFRDSSNAIFSNIAKDPKNKRIKALNVKGADAVFSRSVLKELEEFVRQFGAQGLAYLQIKEDGIKGPLVKFLSEKGLKNILEKTGAQTGDIVFFGAGDKKIVLDYMGRLRLKVAETLDLIDKDALNFLWVVNFPMFEKTENGYHAAHHPFTMPKNIECEDIEEVEAHAYDVVLNGVELGGGSIRIHKEEMQKKVFEKINIHEEEAQKKFGFLLEALKFGAPPHGGFAIGFDRLIMLMTKSHSIRDVIAFPKTQKASCLLTDAPSPINEEQLRELHIRLRK</sequence>
<name>SYDND_HELPH</name>
<reference key="1">
    <citation type="journal article" date="2006" name="Proc. Natl. Acad. Sci. U.S.A.">
        <title>The complete genome sequence of a chronic atrophic gastritis Helicobacter pylori strain: evolution during disease progression.</title>
        <authorList>
            <person name="Oh J.D."/>
            <person name="Kling-Baeckhed H."/>
            <person name="Giannakis M."/>
            <person name="Xu J."/>
            <person name="Fulton R.S."/>
            <person name="Fulton L.A."/>
            <person name="Cordum H.S."/>
            <person name="Wang C."/>
            <person name="Elliott G."/>
            <person name="Edwards J."/>
            <person name="Mardis E.R."/>
            <person name="Engstrand L.G."/>
            <person name="Gordon J.I."/>
        </authorList>
    </citation>
    <scope>NUCLEOTIDE SEQUENCE [LARGE SCALE GENOMIC DNA]</scope>
    <source>
        <strain>HPAG1</strain>
    </source>
</reference>
<protein>
    <recommendedName>
        <fullName evidence="1">Aspartate--tRNA(Asp/Asn) ligase</fullName>
        <ecNumber evidence="1">6.1.1.23</ecNumber>
    </recommendedName>
    <alternativeName>
        <fullName evidence="1">Aspartyl-tRNA synthetase</fullName>
        <shortName evidence="1">AspRS</shortName>
    </alternativeName>
    <alternativeName>
        <fullName evidence="1">Non-discriminating aspartyl-tRNA synthetase</fullName>
        <shortName evidence="1">ND-AspRS</shortName>
    </alternativeName>
</protein>
<comment type="function">
    <text evidence="1">Aspartyl-tRNA synthetase with relaxed tRNA specificity since it is able to aspartylate not only its cognate tRNA(Asp) but also tRNA(Asn). Reaction proceeds in two steps: L-aspartate is first activated by ATP to form Asp-AMP and then transferred to the acceptor end of tRNA(Asp/Asn).</text>
</comment>
<comment type="catalytic activity">
    <reaction evidence="1">
        <text>tRNA(Asx) + L-aspartate + ATP = L-aspartyl-tRNA(Asx) + AMP + diphosphate</text>
        <dbReference type="Rhea" id="RHEA:18349"/>
        <dbReference type="Rhea" id="RHEA-COMP:9710"/>
        <dbReference type="Rhea" id="RHEA-COMP:9711"/>
        <dbReference type="ChEBI" id="CHEBI:29991"/>
        <dbReference type="ChEBI" id="CHEBI:30616"/>
        <dbReference type="ChEBI" id="CHEBI:33019"/>
        <dbReference type="ChEBI" id="CHEBI:78442"/>
        <dbReference type="ChEBI" id="CHEBI:78516"/>
        <dbReference type="ChEBI" id="CHEBI:456215"/>
        <dbReference type="EC" id="6.1.1.23"/>
    </reaction>
</comment>
<comment type="subunit">
    <text evidence="1">Homodimer.</text>
</comment>
<comment type="subcellular location">
    <subcellularLocation>
        <location evidence="1">Cytoplasm</location>
    </subcellularLocation>
</comment>
<comment type="similarity">
    <text evidence="1">Belongs to the class-II aminoacyl-tRNA synthetase family. Type 1 subfamily.</text>
</comment>
<dbReference type="EC" id="6.1.1.23" evidence="1"/>
<dbReference type="EMBL" id="CP000241">
    <property type="protein sequence ID" value="ABF84665.1"/>
    <property type="molecule type" value="Genomic_DNA"/>
</dbReference>
<dbReference type="RefSeq" id="WP_001256453.1">
    <property type="nucleotide sequence ID" value="NC_008086.1"/>
</dbReference>
<dbReference type="SMR" id="Q1CTQ7"/>
<dbReference type="KEGG" id="hpa:HPAG1_0598"/>
<dbReference type="HOGENOM" id="CLU_014330_3_2_7"/>
<dbReference type="GO" id="GO:0005737">
    <property type="term" value="C:cytoplasm"/>
    <property type="evidence" value="ECO:0007669"/>
    <property type="project" value="UniProtKB-SubCell"/>
</dbReference>
<dbReference type="GO" id="GO:0004815">
    <property type="term" value="F:aspartate-tRNA ligase activity"/>
    <property type="evidence" value="ECO:0007669"/>
    <property type="project" value="UniProtKB-UniRule"/>
</dbReference>
<dbReference type="GO" id="GO:0050560">
    <property type="term" value="F:aspartate-tRNA(Asn) ligase activity"/>
    <property type="evidence" value="ECO:0007669"/>
    <property type="project" value="UniProtKB-EC"/>
</dbReference>
<dbReference type="GO" id="GO:0005524">
    <property type="term" value="F:ATP binding"/>
    <property type="evidence" value="ECO:0007669"/>
    <property type="project" value="UniProtKB-UniRule"/>
</dbReference>
<dbReference type="GO" id="GO:0003676">
    <property type="term" value="F:nucleic acid binding"/>
    <property type="evidence" value="ECO:0007669"/>
    <property type="project" value="InterPro"/>
</dbReference>
<dbReference type="GO" id="GO:0006422">
    <property type="term" value="P:aspartyl-tRNA aminoacylation"/>
    <property type="evidence" value="ECO:0007669"/>
    <property type="project" value="UniProtKB-UniRule"/>
</dbReference>
<dbReference type="CDD" id="cd00777">
    <property type="entry name" value="AspRS_core"/>
    <property type="match status" value="1"/>
</dbReference>
<dbReference type="CDD" id="cd04317">
    <property type="entry name" value="EcAspRS_like_N"/>
    <property type="match status" value="1"/>
</dbReference>
<dbReference type="Gene3D" id="3.30.930.10">
    <property type="entry name" value="Bira Bifunctional Protein, Domain 2"/>
    <property type="match status" value="1"/>
</dbReference>
<dbReference type="Gene3D" id="3.30.1360.30">
    <property type="entry name" value="GAD-like domain"/>
    <property type="match status" value="1"/>
</dbReference>
<dbReference type="Gene3D" id="2.40.50.140">
    <property type="entry name" value="Nucleic acid-binding proteins"/>
    <property type="match status" value="1"/>
</dbReference>
<dbReference type="HAMAP" id="MF_00044">
    <property type="entry name" value="Asp_tRNA_synth_type1"/>
    <property type="match status" value="1"/>
</dbReference>
<dbReference type="InterPro" id="IPR004364">
    <property type="entry name" value="Aa-tRNA-synt_II"/>
</dbReference>
<dbReference type="InterPro" id="IPR006195">
    <property type="entry name" value="aa-tRNA-synth_II"/>
</dbReference>
<dbReference type="InterPro" id="IPR045864">
    <property type="entry name" value="aa-tRNA-synth_II/BPL/LPL"/>
</dbReference>
<dbReference type="InterPro" id="IPR004524">
    <property type="entry name" value="Asp-tRNA-ligase_1"/>
</dbReference>
<dbReference type="InterPro" id="IPR047089">
    <property type="entry name" value="Asp-tRNA-ligase_1_N"/>
</dbReference>
<dbReference type="InterPro" id="IPR002312">
    <property type="entry name" value="Asp/Asn-tRNA-synth_IIb"/>
</dbReference>
<dbReference type="InterPro" id="IPR047090">
    <property type="entry name" value="AspRS_core"/>
</dbReference>
<dbReference type="InterPro" id="IPR004115">
    <property type="entry name" value="GAD-like_sf"/>
</dbReference>
<dbReference type="InterPro" id="IPR029351">
    <property type="entry name" value="GAD_dom"/>
</dbReference>
<dbReference type="InterPro" id="IPR012340">
    <property type="entry name" value="NA-bd_OB-fold"/>
</dbReference>
<dbReference type="InterPro" id="IPR004365">
    <property type="entry name" value="NA-bd_OB_tRNA"/>
</dbReference>
<dbReference type="NCBIfam" id="TIGR00459">
    <property type="entry name" value="aspS_bact"/>
    <property type="match status" value="1"/>
</dbReference>
<dbReference type="NCBIfam" id="NF001750">
    <property type="entry name" value="PRK00476.1"/>
    <property type="match status" value="1"/>
</dbReference>
<dbReference type="PANTHER" id="PTHR22594:SF5">
    <property type="entry name" value="ASPARTATE--TRNA LIGASE, MITOCHONDRIAL"/>
    <property type="match status" value="1"/>
</dbReference>
<dbReference type="PANTHER" id="PTHR22594">
    <property type="entry name" value="ASPARTYL/LYSYL-TRNA SYNTHETASE"/>
    <property type="match status" value="1"/>
</dbReference>
<dbReference type="Pfam" id="PF02938">
    <property type="entry name" value="GAD"/>
    <property type="match status" value="1"/>
</dbReference>
<dbReference type="Pfam" id="PF00152">
    <property type="entry name" value="tRNA-synt_2"/>
    <property type="match status" value="1"/>
</dbReference>
<dbReference type="Pfam" id="PF01336">
    <property type="entry name" value="tRNA_anti-codon"/>
    <property type="match status" value="1"/>
</dbReference>
<dbReference type="PRINTS" id="PR01042">
    <property type="entry name" value="TRNASYNTHASP"/>
</dbReference>
<dbReference type="SUPFAM" id="SSF55681">
    <property type="entry name" value="Class II aaRS and biotin synthetases"/>
    <property type="match status" value="1"/>
</dbReference>
<dbReference type="SUPFAM" id="SSF55261">
    <property type="entry name" value="GAD domain-like"/>
    <property type="match status" value="1"/>
</dbReference>
<dbReference type="SUPFAM" id="SSF50249">
    <property type="entry name" value="Nucleic acid-binding proteins"/>
    <property type="match status" value="1"/>
</dbReference>
<dbReference type="PROSITE" id="PS50862">
    <property type="entry name" value="AA_TRNA_LIGASE_II"/>
    <property type="match status" value="1"/>
</dbReference>
<proteinExistence type="inferred from homology"/>
<gene>
    <name evidence="1" type="primary">aspS</name>
    <name type="ordered locus">HPAG1_0598</name>
</gene>
<accession>Q1CTQ7</accession>
<feature type="chain" id="PRO_1000006685" description="Aspartate--tRNA(Asp/Asn) ligase">
    <location>
        <begin position="1"/>
        <end position="577"/>
    </location>
</feature>
<feature type="region of interest" description="Aspartate" evidence="1">
    <location>
        <begin position="195"/>
        <end position="198"/>
    </location>
</feature>
<feature type="binding site" evidence="1">
    <location>
        <position position="171"/>
    </location>
    <ligand>
        <name>L-aspartate</name>
        <dbReference type="ChEBI" id="CHEBI:29991"/>
    </ligand>
</feature>
<feature type="binding site" evidence="1">
    <location>
        <begin position="217"/>
        <end position="219"/>
    </location>
    <ligand>
        <name>ATP</name>
        <dbReference type="ChEBI" id="CHEBI:30616"/>
    </ligand>
</feature>
<feature type="binding site" evidence="1">
    <location>
        <position position="217"/>
    </location>
    <ligand>
        <name>L-aspartate</name>
        <dbReference type="ChEBI" id="CHEBI:29991"/>
    </ligand>
</feature>
<feature type="binding site" evidence="1">
    <location>
        <position position="226"/>
    </location>
    <ligand>
        <name>ATP</name>
        <dbReference type="ChEBI" id="CHEBI:30616"/>
    </ligand>
</feature>
<feature type="binding site" evidence="1">
    <location>
        <position position="444"/>
    </location>
    <ligand>
        <name>L-aspartate</name>
        <dbReference type="ChEBI" id="CHEBI:29991"/>
    </ligand>
</feature>
<feature type="binding site" evidence="1">
    <location>
        <position position="474"/>
    </location>
    <ligand>
        <name>ATP</name>
        <dbReference type="ChEBI" id="CHEBI:30616"/>
    </ligand>
</feature>
<feature type="binding site" evidence="1">
    <location>
        <position position="481"/>
    </location>
    <ligand>
        <name>L-aspartate</name>
        <dbReference type="ChEBI" id="CHEBI:29991"/>
    </ligand>
</feature>
<feature type="binding site" evidence="1">
    <location>
        <begin position="526"/>
        <end position="529"/>
    </location>
    <ligand>
        <name>ATP</name>
        <dbReference type="ChEBI" id="CHEBI:30616"/>
    </ligand>
</feature>
<feature type="site" description="Important for tRNA non-discrimination" evidence="1">
    <location>
        <position position="30"/>
    </location>
</feature>
<feature type="site" description="Important for tRNA non-discrimination" evidence="1">
    <location>
        <position position="80"/>
    </location>
</feature>
<evidence type="ECO:0000255" key="1">
    <source>
        <dbReference type="HAMAP-Rule" id="MF_00044"/>
    </source>
</evidence>
<organism>
    <name type="scientific">Helicobacter pylori (strain HPAG1)</name>
    <dbReference type="NCBI Taxonomy" id="357544"/>
    <lineage>
        <taxon>Bacteria</taxon>
        <taxon>Pseudomonadati</taxon>
        <taxon>Campylobacterota</taxon>
        <taxon>Epsilonproteobacteria</taxon>
        <taxon>Campylobacterales</taxon>
        <taxon>Helicobacteraceae</taxon>
        <taxon>Helicobacter</taxon>
    </lineage>
</organism>
<keyword id="KW-0030">Aminoacyl-tRNA synthetase</keyword>
<keyword id="KW-0067">ATP-binding</keyword>
<keyword id="KW-0963">Cytoplasm</keyword>
<keyword id="KW-0436">Ligase</keyword>
<keyword id="KW-0547">Nucleotide-binding</keyword>
<keyword id="KW-0648">Protein biosynthesis</keyword>